<name>DIT9_BPB03</name>
<accession>Q37890</accession>
<sequence>MAYVPLSGTDVRIFSNVPFSNDYKSTRWFTNADAQYSYFNAKPRVHVINECNFVGLKEGTPHIRVNKRIDDLYNACYMIFRNTQYSNKWFYCFVTRLEYVNSGVTNLYFEIDVIQTWMFDFKFQPSYIVREHQEMWDANNEPLTNTIDEGLNYGTEYDVVAVEQYKPYGDLMFMVCISKSKMHATAGETFKAGEIAANINGAPQPLSYYVHPFYEDGSSPKVTIGSNEVQVSKPTDFLKNMFTQEHAVNNIVSLYVTDYIGLNIHYDESAKTMSLRDTMFEHAQIADDKHPNVNTIYLKEVKEYEEKTIDTGYKFASFANNEQSKLLMYPYCVTTITDFKGNQIDIKNEYVNGSNLKIQVRGSLGVSNKVTYSVQDYNADTTLSGDQNLTASCNTSLINNNPNDVAIINDYLSAYLQGNKNSLENQKDSILFNGVMSMLGNGIGAVGSAATGSAVGVASSATGMVSSAGNAVLQIQGMQAKQADIANTPPQLVKMGGNTAYDYGNGYRGVYVIKKQIKEEYRNILSDFSRKYGYKTNLVKMPNLRTRESYNYVQTKDCNIIGNLNNEDLQKIRTIFDSGITLWHADPVGDYTLNNEVR</sequence>
<evidence type="ECO:0000250" key="1">
    <source>
        <dbReference type="UniProtKB" id="P04331"/>
    </source>
</evidence>
<evidence type="ECO:0000305" key="2"/>
<proteinExistence type="inferred from homology"/>
<dbReference type="EMBL" id="X99260">
    <property type="protein sequence ID" value="CAA67657.1"/>
    <property type="molecule type" value="Genomic_DNA"/>
</dbReference>
<dbReference type="RefSeq" id="NP_690643.1">
    <property type="nucleotide sequence ID" value="NC_004165.1"/>
</dbReference>
<dbReference type="SMR" id="Q37890"/>
<dbReference type="KEGG" id="vg:955362"/>
<dbReference type="Proteomes" id="UP000000971">
    <property type="component" value="Segment"/>
</dbReference>
<dbReference type="GO" id="GO:0098026">
    <property type="term" value="C:virus tail, tube"/>
    <property type="evidence" value="ECO:0007669"/>
    <property type="project" value="UniProtKB-KW"/>
</dbReference>
<dbReference type="GO" id="GO:0099002">
    <property type="term" value="P:symbiont genome ejection through host cell envelope, short tail mechanism"/>
    <property type="evidence" value="ECO:0007669"/>
    <property type="project" value="UniProtKB-KW"/>
</dbReference>
<dbReference type="GO" id="GO:0044694">
    <property type="term" value="P:symbiont genome entry into host cell via pore formation in plasma membrane"/>
    <property type="evidence" value="ECO:0007669"/>
    <property type="project" value="UniProtKB-KW"/>
</dbReference>
<dbReference type="InterPro" id="IPR048710">
    <property type="entry name" value="Gp9_C"/>
</dbReference>
<dbReference type="InterPro" id="IPR031772">
    <property type="entry name" value="Gp9_N"/>
</dbReference>
<dbReference type="Pfam" id="PF16838">
    <property type="entry name" value="Caud_tail_N"/>
    <property type="match status" value="1"/>
</dbReference>
<dbReference type="Pfam" id="PF20934">
    <property type="entry name" value="phi29_gp9_C"/>
    <property type="match status" value="1"/>
</dbReference>
<protein>
    <recommendedName>
        <fullName evidence="1">Tail knob protein gp9</fullName>
    </recommendedName>
    <alternativeName>
        <fullName evidence="1">Distal tube protein</fullName>
    </alternativeName>
    <alternativeName>
        <fullName evidence="1">Gene product 9</fullName>
        <shortName evidence="1">gp9</shortName>
    </alternativeName>
    <alternativeName>
        <fullName evidence="1">Protein p9</fullName>
    </alternativeName>
</protein>
<reference key="1">
    <citation type="journal article" date="1997" name="Gene">
        <title>Bacteriophage B103: complete DNA sequence of its genome and relationship to other Bacillus phages.</title>
        <authorList>
            <person name="Pecenkova T."/>
            <person name="Benes V."/>
            <person name="Paces J."/>
            <person name="Vlcek C."/>
            <person name="Paces V."/>
        </authorList>
    </citation>
    <scope>NUCLEOTIDE SEQUENCE [LARGE SCALE GENOMIC DNA]</scope>
</reference>
<organismHost>
    <name type="scientific">Bacillus subtilis</name>
    <dbReference type="NCBI Taxonomy" id="1423"/>
</organismHost>
<comment type="function">
    <text evidence="1">Distal (knob) tail protein that plugs the end of the tube before DNA ejection and forms a channel perforating the host membrane during ejection.</text>
</comment>
<comment type="subunit">
    <text evidence="1">Homohexamer; forms a hexameric tube structure with six flexible hydrophobic loops.</text>
</comment>
<comment type="subcellular location">
    <subcellularLocation>
        <location evidence="1">Virion</location>
    </subcellularLocation>
    <text evidence="1">Present in 6 copies in the virion. Located at the tip of the tail and constitutes most of the tail knob.</text>
</comment>
<comment type="similarity">
    <text evidence="2">Belongs to the picovirinae distal tube protein family.</text>
</comment>
<organism>
    <name type="scientific">Bacillus phage B103</name>
    <name type="common">Bacteriophage B103</name>
    <dbReference type="NCBI Taxonomy" id="2994042"/>
    <lineage>
        <taxon>Viruses</taxon>
        <taxon>Duplodnaviria</taxon>
        <taxon>Heunggongvirae</taxon>
        <taxon>Uroviricota</taxon>
        <taxon>Caudoviricetes</taxon>
        <taxon>Salasmaviridae</taxon>
        <taxon>Picovirinae</taxon>
        <taxon>Beecentumtrevirus</taxon>
        <taxon>Beecentumtrevirus B103</taxon>
    </lineage>
</organism>
<gene>
    <name type="primary">9</name>
</gene>
<feature type="chain" id="PRO_0000106581" description="Tail knob protein gp9">
    <location>
        <begin position="1"/>
        <end position="598"/>
    </location>
</feature>
<keyword id="KW-0426">Late protein</keyword>
<keyword id="KW-1172">Pore-mediated penetration of viral genome into host cell</keyword>
<keyword id="KW-1171">Viral genome ejection through host cell envelope</keyword>
<keyword id="KW-1162">Viral penetration into host cytoplasm</keyword>
<keyword id="KW-1244">Viral short tail ejection system</keyword>
<keyword id="KW-1227">Viral tail protein</keyword>
<keyword id="KW-1228">Viral tail tube protein</keyword>
<keyword id="KW-0946">Virion</keyword>
<keyword id="KW-1160">Virus entry into host cell</keyword>